<accession>P86793</accession>
<accession>O09002</accession>
<accession>O09006</accession>
<accession>P84443</accession>
<accession>Q5M8M5</accession>
<accession>Q91V84</accession>
<sequence>MAQMMTLSLLSLVLALCIPWTQGSDGGGQDCCLKYSQKKIPYSIVRGYRKQEPSLGCPIPAILFLPRKHSKPELCANPEEGWVQNLMRRLDQPPAPGKQSPGCRKNRGTSKSGKKGKGSKGCKRTEQTQPSRG</sequence>
<protein>
    <recommendedName>
        <fullName>C-C motif chemokine 21c</fullName>
    </recommendedName>
    <alternativeName>
        <fullName>6Ckine</fullName>
    </alternativeName>
    <alternativeName>
        <fullName>Beta-chemokine exodus-2</fullName>
    </alternativeName>
    <alternativeName>
        <fullName>Small-inducible cytokine A21c</fullName>
    </alternativeName>
    <alternativeName>
        <fullName>Thymus-derived chemotactic agent 4</fullName>
        <shortName>TCA4</shortName>
    </alternativeName>
</protein>
<reference key="1">
    <citation type="journal article" date="2001" name="J. Immunol.">
        <title>Gene duplications at the chemokine locus on mouse chromosome 4: multiple strain-specific haplotypes and the deletion of secondary lymphoid-organ chemokine and EBI-1 ligand chemokine genes in the plt mutation.</title>
        <authorList>
            <person name="Nakano H."/>
            <person name="Gunn M.D."/>
        </authorList>
    </citation>
    <scope>NUCLEOTIDE SEQUENCE [GENOMIC DNA]</scope>
    <source>
        <strain>129/Ola</strain>
    </source>
</reference>
<reference key="2">
    <citation type="journal article" date="2009" name="PLoS Biol.">
        <title>Lineage-specific biology revealed by a finished genome assembly of the mouse.</title>
        <authorList>
            <person name="Church D.M."/>
            <person name="Goodstadt L."/>
            <person name="Hillier L.W."/>
            <person name="Zody M.C."/>
            <person name="Goldstein S."/>
            <person name="She X."/>
            <person name="Bult C.J."/>
            <person name="Agarwala R."/>
            <person name="Cherry J.L."/>
            <person name="DiCuccio M."/>
            <person name="Hlavina W."/>
            <person name="Kapustin Y."/>
            <person name="Meric P."/>
            <person name="Maglott D."/>
            <person name="Birtle Z."/>
            <person name="Marques A.C."/>
            <person name="Graves T."/>
            <person name="Zhou S."/>
            <person name="Teague B."/>
            <person name="Potamousis K."/>
            <person name="Churas C."/>
            <person name="Place M."/>
            <person name="Herschleb J."/>
            <person name="Runnheim R."/>
            <person name="Forrest D."/>
            <person name="Amos-Landgraf J."/>
            <person name="Schwartz D.C."/>
            <person name="Cheng Z."/>
            <person name="Lindblad-Toh K."/>
            <person name="Eichler E.E."/>
            <person name="Ponting C.P."/>
        </authorList>
    </citation>
    <scope>NUCLEOTIDE SEQUENCE [LARGE SCALE GENOMIC DNA]</scope>
    <source>
        <strain>C57BL/6J</strain>
    </source>
</reference>
<reference key="3">
    <citation type="journal article" date="2004" name="Genome Res.">
        <title>The status, quality, and expansion of the NIH full-length cDNA project: the Mammalian Gene Collection (MGC).</title>
        <authorList>
            <consortium name="The MGC Project Team"/>
        </authorList>
    </citation>
    <scope>NUCLEOTIDE SEQUENCE [LARGE SCALE MRNA]</scope>
    <source>
        <tissue>Heart</tissue>
    </source>
</reference>
<reference key="4">
    <citation type="journal article" date="1998" name="Proc. Natl. Acad. Sci. U.S.A.">
        <title>A chemokine expressed in lymphoid high endothelial venules promotes the adhesion and chemotaxis of naive T lymphocytes.</title>
        <authorList>
            <person name="Gunn M.D."/>
            <person name="Tangemann K."/>
            <person name="Tam C."/>
            <person name="Cyster J.G."/>
            <person name="Rosen S.D."/>
            <person name="Williams L.T."/>
        </authorList>
    </citation>
    <scope>CHARACTERIZATION</scope>
</reference>
<gene>
    <name type="primary">Ccl21c</name>
    <name type="synonym">Scya21c</name>
</gene>
<feature type="signal peptide" evidence="4">
    <location>
        <begin position="1"/>
        <end position="23"/>
    </location>
</feature>
<feature type="chain" id="PRO_0000403422" description="C-C motif chemokine 21c">
    <location>
        <begin position="24"/>
        <end position="133"/>
    </location>
</feature>
<feature type="region of interest" description="Disordered" evidence="5">
    <location>
        <begin position="87"/>
        <end position="133"/>
    </location>
</feature>
<feature type="region of interest" description="C-terminal basic extension">
    <location>
        <begin position="98"/>
        <end position="133"/>
    </location>
</feature>
<feature type="compositionally biased region" description="Basic residues" evidence="5">
    <location>
        <begin position="104"/>
        <end position="122"/>
    </location>
</feature>
<feature type="disulfide bond" evidence="1">
    <location>
        <begin position="31"/>
        <end position="57"/>
    </location>
</feature>
<feature type="disulfide bond" evidence="1">
    <location>
        <begin position="32"/>
        <end position="75"/>
    </location>
</feature>
<feature type="disulfide bond" evidence="4">
    <location>
        <begin position="103"/>
        <end position="122"/>
    </location>
</feature>
<proteinExistence type="evidence at protein level"/>
<name>CC21C_MOUSE</name>
<organism>
    <name type="scientific">Mus musculus</name>
    <name type="common">Mouse</name>
    <dbReference type="NCBI Taxonomy" id="10090"/>
    <lineage>
        <taxon>Eukaryota</taxon>
        <taxon>Metazoa</taxon>
        <taxon>Chordata</taxon>
        <taxon>Craniata</taxon>
        <taxon>Vertebrata</taxon>
        <taxon>Euteleostomi</taxon>
        <taxon>Mammalia</taxon>
        <taxon>Eutheria</taxon>
        <taxon>Euarchontoglires</taxon>
        <taxon>Glires</taxon>
        <taxon>Rodentia</taxon>
        <taxon>Myomorpha</taxon>
        <taxon>Muroidea</taxon>
        <taxon>Muridae</taxon>
        <taxon>Murinae</taxon>
        <taxon>Mus</taxon>
        <taxon>Mus</taxon>
    </lineage>
</organism>
<keyword id="KW-0145">Chemotaxis</keyword>
<keyword id="KW-0202">Cytokine</keyword>
<keyword id="KW-1015">Disulfide bond</keyword>
<keyword id="KW-0395">Inflammatory response</keyword>
<keyword id="KW-1185">Reference proteome</keyword>
<keyword id="KW-0964">Secreted</keyword>
<keyword id="KW-0732">Signal</keyword>
<comment type="function">
    <text>Inhibits hemopoiesis and stimulates chemotaxis. Chemotactic in vitro for thymocytes and activated T-cells, but not for B-cells, macrophages, or neutrophils. Potent mesangial cell chemoattractant. Shows preferential activity towards naive T-cells. May play a role in mediating homing of lymphocytes to secondary lymphoid organs.</text>
</comment>
<comment type="subunit">
    <text evidence="2 3">Binds to CCR7 and to CXCR3. Interacts with PDPN; relocalizes PDPN to the basolateral membrane. Interacts with GPR174.</text>
</comment>
<comment type="subcellular location">
    <subcellularLocation>
        <location>Secreted</location>
    </subcellularLocation>
</comment>
<comment type="tissue specificity">
    <text>Expressed strongly in lung, spleen, thymus, peripheral and mesentric lymph nodes. Also expressed in the testis, kidney, liver, and heart.</text>
</comment>
<comment type="miscellaneous">
    <text>Three genes code for Ccl21 in mouse. Ccl21b and Ccl21c produce identical proteins while the protein produced by Ccl21a differs at only one position. Ccl21b and Ccl21c have Leu-65 (6Ckine-Leu) while Ccl21a has 'Ser-65' (6Ckine-Ser).</text>
</comment>
<comment type="similarity">
    <text evidence="6">Belongs to the intercrine beta (chemokine CC) family.</text>
</comment>
<evidence type="ECO:0000250" key="1"/>
<evidence type="ECO:0000250" key="2">
    <source>
        <dbReference type="UniProtKB" id="O00585"/>
    </source>
</evidence>
<evidence type="ECO:0000250" key="3">
    <source>
        <dbReference type="UniProtKB" id="P84444"/>
    </source>
</evidence>
<evidence type="ECO:0000255" key="4"/>
<evidence type="ECO:0000256" key="5">
    <source>
        <dbReference type="SAM" id="MobiDB-lite"/>
    </source>
</evidence>
<evidence type="ECO:0000305" key="6"/>
<dbReference type="EMBL" id="AF307987">
    <property type="protein sequence ID" value="AAG45835.1"/>
    <property type="molecule type" value="Genomic_DNA"/>
</dbReference>
<dbReference type="EMBL" id="AL844494">
    <property type="status" value="NOT_ANNOTATED_CDS"/>
    <property type="molecule type" value="Genomic_DNA"/>
</dbReference>
<dbReference type="EMBL" id="BC087957">
    <property type="protein sequence ID" value="AAH87957.1"/>
    <property type="molecule type" value="mRNA"/>
</dbReference>
<dbReference type="RefSeq" id="NP_001180595.1">
    <property type="nucleotide sequence ID" value="NM_001193666.1"/>
</dbReference>
<dbReference type="RefSeq" id="NP_001180597.1">
    <property type="nucleotide sequence ID" value="NM_001193668.1"/>
</dbReference>
<dbReference type="RefSeq" id="NP_001257289.1">
    <property type="nucleotide sequence ID" value="NM_001270360.1"/>
</dbReference>
<dbReference type="RefSeq" id="NP_075539.1">
    <property type="nucleotide sequence ID" value="NM_023052.2"/>
</dbReference>
<dbReference type="RefSeq" id="XP_001473308.1">
    <property type="nucleotide sequence ID" value="XM_001473258.5"/>
</dbReference>
<dbReference type="RefSeq" id="XP_001473444.1">
    <property type="nucleotide sequence ID" value="XM_001473394.6"/>
</dbReference>
<dbReference type="SMR" id="P86793"/>
<dbReference type="FunCoup" id="P86793">
    <property type="interactions" value="741"/>
</dbReference>
<dbReference type="PhosphoSitePlus" id="P86793"/>
<dbReference type="jPOST" id="P86793"/>
<dbReference type="ProteomicsDB" id="265588"/>
<dbReference type="DNASU" id="65956"/>
<dbReference type="Ensembl" id="ENSMUST00000098123.4">
    <property type="protein sequence ID" value="ENSMUSP00000095727.4"/>
    <property type="gene ID" value="ENSMUSG00000073878.4"/>
</dbReference>
<dbReference type="Ensembl" id="ENSMUST00000098128.4">
    <property type="protein sequence ID" value="ENSMUSP00000095732.4"/>
    <property type="gene ID" value="ENSMUSG00000094065.2"/>
</dbReference>
<dbReference type="Ensembl" id="ENSMUST00000178168.3">
    <property type="protein sequence ID" value="ENSMUSP00000136903.2"/>
    <property type="gene ID" value="ENSMUSG00000096596.3"/>
</dbReference>
<dbReference type="Ensembl" id="ENSMUST00000178864.3">
    <property type="protein sequence ID" value="ENSMUSP00000137149.2"/>
    <property type="gene ID" value="ENSMUSG00000095675.3"/>
</dbReference>
<dbReference type="GeneID" id="100042493"/>
<dbReference type="GeneID" id="100504239"/>
<dbReference type="GeneID" id="100504346"/>
<dbReference type="GeneID" id="100862177"/>
<dbReference type="KEGG" id="mmu:100042493"/>
<dbReference type="KEGG" id="mmu:100504239"/>
<dbReference type="KEGG" id="mmu:100504346"/>
<dbReference type="KEGG" id="mmu:100862177"/>
<dbReference type="AGR" id="MGI:1891386"/>
<dbReference type="CTD" id="100042493"/>
<dbReference type="CTD" id="100504239"/>
<dbReference type="CTD" id="100504346"/>
<dbReference type="CTD" id="100862177"/>
<dbReference type="MGI" id="MGI:1891386">
    <property type="gene designation" value="Ccl21c"/>
</dbReference>
<dbReference type="VEuPathDB" id="HostDB:ENSMUSG00000073878"/>
<dbReference type="VEuPathDB" id="HostDB:ENSMUSG00000094065"/>
<dbReference type="VEuPathDB" id="HostDB:ENSMUSG00000094121"/>
<dbReference type="VEuPathDB" id="HostDB:ENSMUSG00000095675"/>
<dbReference type="VEuPathDB" id="HostDB:ENSMUSG00000096271"/>
<dbReference type="VEuPathDB" id="HostDB:ENSMUSG00000096596"/>
<dbReference type="VEuPathDB" id="HostDB:ENSMUSG00000096873"/>
<dbReference type="GeneTree" id="ENSGT01130000278316"/>
<dbReference type="HOGENOM" id="CLU_141716_3_2_1"/>
<dbReference type="InParanoid" id="P86793"/>
<dbReference type="OMA" id="SDCCLKH"/>
<dbReference type="OrthoDB" id="9445745at2759"/>
<dbReference type="PhylomeDB" id="P86793"/>
<dbReference type="TreeFam" id="TF338224"/>
<dbReference type="BioGRID-ORCS" id="100042493">
    <property type="hits" value="4 hits in 37 CRISPR screens"/>
</dbReference>
<dbReference type="BioGRID-ORCS" id="100504239">
    <property type="hits" value="0 hits in 11 CRISPR screens"/>
</dbReference>
<dbReference type="BioGRID-ORCS" id="100504346">
    <property type="hits" value="0 hits in 12 CRISPR screens"/>
</dbReference>
<dbReference type="BioGRID-ORCS" id="100862177">
    <property type="hits" value="2 hits in 23 CRISPR screens"/>
</dbReference>
<dbReference type="BioGRID-ORCS" id="65956">
    <property type="hits" value="0 hits in 4 CRISPR screens"/>
</dbReference>
<dbReference type="PRO" id="PR:P86793"/>
<dbReference type="Proteomes" id="UP000000589">
    <property type="component" value="Chromosome 4"/>
</dbReference>
<dbReference type="RNAct" id="P86793">
    <property type="molecule type" value="protein"/>
</dbReference>
<dbReference type="Bgee" id="ENSMUSG00000073878">
    <property type="expression patterns" value="Expressed in urinary bladder and 29 other cell types or tissues"/>
</dbReference>
<dbReference type="ExpressionAtlas" id="P86793">
    <property type="expression patterns" value="differential"/>
</dbReference>
<dbReference type="GO" id="GO:0005615">
    <property type="term" value="C:extracellular space"/>
    <property type="evidence" value="ECO:0007669"/>
    <property type="project" value="UniProtKB-KW"/>
</dbReference>
<dbReference type="GO" id="GO:0008009">
    <property type="term" value="F:chemokine activity"/>
    <property type="evidence" value="ECO:0007669"/>
    <property type="project" value="InterPro"/>
</dbReference>
<dbReference type="GO" id="GO:0006955">
    <property type="term" value="P:immune response"/>
    <property type="evidence" value="ECO:0007669"/>
    <property type="project" value="InterPro"/>
</dbReference>
<dbReference type="GO" id="GO:0006954">
    <property type="term" value="P:inflammatory response"/>
    <property type="evidence" value="ECO:0007669"/>
    <property type="project" value="UniProtKB-KW"/>
</dbReference>
<dbReference type="FunFam" id="2.40.50.40:FF:000024">
    <property type="entry name" value="C-C motif chemokine 21"/>
    <property type="match status" value="1"/>
</dbReference>
<dbReference type="Gene3D" id="2.40.50.40">
    <property type="match status" value="1"/>
</dbReference>
<dbReference type="InterPro" id="IPR039809">
    <property type="entry name" value="Chemokine_b/g/d"/>
</dbReference>
<dbReference type="InterPro" id="IPR001811">
    <property type="entry name" value="Chemokine_IL8-like_dom"/>
</dbReference>
<dbReference type="InterPro" id="IPR036048">
    <property type="entry name" value="Interleukin_8-like_sf"/>
</dbReference>
<dbReference type="PANTHER" id="PTHR12015:SF72">
    <property type="entry name" value="C-C MOTIF CHEMOKINE 21"/>
    <property type="match status" value="1"/>
</dbReference>
<dbReference type="PANTHER" id="PTHR12015">
    <property type="entry name" value="SMALL INDUCIBLE CYTOKINE A"/>
    <property type="match status" value="1"/>
</dbReference>
<dbReference type="Pfam" id="PF00048">
    <property type="entry name" value="IL8"/>
    <property type="match status" value="1"/>
</dbReference>
<dbReference type="SMART" id="SM00199">
    <property type="entry name" value="SCY"/>
    <property type="match status" value="1"/>
</dbReference>
<dbReference type="SUPFAM" id="SSF54117">
    <property type="entry name" value="Interleukin 8-like chemokines"/>
    <property type="match status" value="1"/>
</dbReference>